<organism>
    <name type="scientific">Helicobacter pylori (strain P12)</name>
    <dbReference type="NCBI Taxonomy" id="570508"/>
    <lineage>
        <taxon>Bacteria</taxon>
        <taxon>Pseudomonadati</taxon>
        <taxon>Campylobacterota</taxon>
        <taxon>Epsilonproteobacteria</taxon>
        <taxon>Campylobacterales</taxon>
        <taxon>Helicobacteraceae</taxon>
        <taxon>Helicobacter</taxon>
    </lineage>
</organism>
<comment type="function">
    <text evidence="1">Catalyzes the hydrolysis of short-chain aliphatic amides to their corresponding organic acids with release of ammonia.</text>
</comment>
<comment type="function">
    <text evidence="1">Also exhibits in vitro acyl transferase activity, transferring the acyl moiety of short-chain amides to hydroxylamine to form hydroxamates.</text>
</comment>
<comment type="catalytic activity">
    <reaction evidence="1">
        <text>a monocarboxylic acid amide + H2O = a monocarboxylate + NH4(+)</text>
        <dbReference type="Rhea" id="RHEA:12020"/>
        <dbReference type="ChEBI" id="CHEBI:15377"/>
        <dbReference type="ChEBI" id="CHEBI:28938"/>
        <dbReference type="ChEBI" id="CHEBI:35757"/>
        <dbReference type="ChEBI" id="CHEBI:83628"/>
        <dbReference type="EC" id="3.5.1.4"/>
    </reaction>
</comment>
<comment type="similarity">
    <text evidence="1">Belongs to the carbon-nitrogen hydrolase superfamily. Aliphatic amidase family.</text>
</comment>
<keyword id="KW-0378">Hydrolase</keyword>
<dbReference type="EC" id="3.5.1.4" evidence="1"/>
<dbReference type="EMBL" id="CP001217">
    <property type="protein sequence ID" value="ACJ07451.1"/>
    <property type="molecule type" value="Genomic_DNA"/>
</dbReference>
<dbReference type="SMR" id="B6JKM3"/>
<dbReference type="KEGG" id="hpp:HPP12_0293"/>
<dbReference type="HOGENOM" id="CLU_071797_0_0_7"/>
<dbReference type="Proteomes" id="UP000008198">
    <property type="component" value="Chromosome"/>
</dbReference>
<dbReference type="GO" id="GO:0004040">
    <property type="term" value="F:amidase activity"/>
    <property type="evidence" value="ECO:0007669"/>
    <property type="project" value="UniProtKB-UniRule"/>
</dbReference>
<dbReference type="CDD" id="cd07565">
    <property type="entry name" value="aliphatic_amidase"/>
    <property type="match status" value="1"/>
</dbReference>
<dbReference type="FunFam" id="3.60.110.10:FF:000014">
    <property type="entry name" value="Aliphatic amidase"/>
    <property type="match status" value="1"/>
</dbReference>
<dbReference type="Gene3D" id="3.60.110.10">
    <property type="entry name" value="Carbon-nitrogen hydrolase"/>
    <property type="match status" value="1"/>
</dbReference>
<dbReference type="HAMAP" id="MF_01242">
    <property type="entry name" value="Aliphatic_amidase"/>
    <property type="match status" value="1"/>
</dbReference>
<dbReference type="InterPro" id="IPR050345">
    <property type="entry name" value="Aliph_Amidase/BUP"/>
</dbReference>
<dbReference type="InterPro" id="IPR023719">
    <property type="entry name" value="Aliphatic_amidase"/>
</dbReference>
<dbReference type="InterPro" id="IPR003010">
    <property type="entry name" value="C-N_Hydrolase"/>
</dbReference>
<dbReference type="InterPro" id="IPR036526">
    <property type="entry name" value="C-N_Hydrolase_sf"/>
</dbReference>
<dbReference type="NCBIfam" id="NF009802">
    <property type="entry name" value="PRK13286.1"/>
    <property type="match status" value="1"/>
</dbReference>
<dbReference type="PANTHER" id="PTHR43674:SF14">
    <property type="entry name" value="ALIPHATIC AMIDASE"/>
    <property type="match status" value="1"/>
</dbReference>
<dbReference type="PANTHER" id="PTHR43674">
    <property type="entry name" value="NITRILASE C965.09-RELATED"/>
    <property type="match status" value="1"/>
</dbReference>
<dbReference type="Pfam" id="PF00795">
    <property type="entry name" value="CN_hydrolase"/>
    <property type="match status" value="1"/>
</dbReference>
<dbReference type="SUPFAM" id="SSF56317">
    <property type="entry name" value="Carbon-nitrogen hydrolase"/>
    <property type="match status" value="1"/>
</dbReference>
<dbReference type="PROSITE" id="PS50263">
    <property type="entry name" value="CN_HYDROLASE"/>
    <property type="match status" value="1"/>
</dbReference>
<gene>
    <name evidence="1" type="primary">amiE</name>
    <name type="ordered locus">HPP12_0293</name>
</gene>
<proteinExistence type="inferred from homology"/>
<sequence length="339" mass="37761">MRHGDISSSPDTVGVAVVNYKMPRLHTKEQVLENCRNIAKVIGGVKQGLPGLDLIIFPEYSTHGIMYDRQEMFDTAASVPGEETAIFAEACKKNKVWGVFSLTGEKHEQAKKNPYNTLILVNDKGEIVQKYRKILPWCPIECWYPGDKTYVVDGPKGLKVSLIICDDGNYPEIWRDCAMRGAELIVRCQGYMYPAKEQQIAIVKAMAWANQCYVAVANATGFDGVYSYFGHSSIIGFDGHTLGECGEEENGLQYAQLSVQQIRDARKYDQSQNQLFKLLHRGYSGVFASGDGDKGVAECPFEFYKTWVNDPKKAQENVEKFTRPSVGVAACPVGDLPTK</sequence>
<feature type="chain" id="PRO_1000139806" description="Aliphatic amidase">
    <location>
        <begin position="1"/>
        <end position="339"/>
    </location>
</feature>
<feature type="domain" description="CN hydrolase" evidence="2">
    <location>
        <begin position="13"/>
        <end position="259"/>
    </location>
</feature>
<feature type="active site" description="Proton acceptor" evidence="1">
    <location>
        <position position="59"/>
    </location>
</feature>
<feature type="active site" description="Proton donor" evidence="1">
    <location>
        <position position="133"/>
    </location>
</feature>
<feature type="active site" description="Nucleophile" evidence="1">
    <location>
        <position position="165"/>
    </location>
</feature>
<accession>B6JKM3</accession>
<evidence type="ECO:0000255" key="1">
    <source>
        <dbReference type="HAMAP-Rule" id="MF_01242"/>
    </source>
</evidence>
<evidence type="ECO:0000255" key="2">
    <source>
        <dbReference type="PROSITE-ProRule" id="PRU00054"/>
    </source>
</evidence>
<name>AMIE_HELP2</name>
<protein>
    <recommendedName>
        <fullName evidence="1">Aliphatic amidase</fullName>
        <ecNumber evidence="1">3.5.1.4</ecNumber>
    </recommendedName>
    <alternativeName>
        <fullName evidence="1">Acylamide amidohydrolase</fullName>
    </alternativeName>
</protein>
<reference key="1">
    <citation type="submission" date="2008-10" db="EMBL/GenBank/DDBJ databases">
        <title>The complete genome sequence of Helicobacter pylori strain P12.</title>
        <authorList>
            <person name="Fischer W."/>
            <person name="Windhager L."/>
            <person name="Karnholz A."/>
            <person name="Zeiller M."/>
            <person name="Zimmer R."/>
            <person name="Haas R."/>
        </authorList>
    </citation>
    <scope>NUCLEOTIDE SEQUENCE [LARGE SCALE GENOMIC DNA]</scope>
    <source>
        <strain>P12</strain>
    </source>
</reference>